<protein>
    <recommendedName>
        <fullName>Ubiquitin carboxyl-terminal hydrolase YUH1</fullName>
        <shortName>UCH</shortName>
        <ecNumber>3.4.19.12</ecNumber>
    </recommendedName>
    <alternativeName>
        <fullName>Ubiquitin thioesterase</fullName>
    </alternativeName>
</protein>
<name>UBL1_YEAST</name>
<sequence>MSGENRAVVPIESNPEVFTNFAHKLGLKNEWAYFDIYSLTEPELLAFLPRPVKAIVLLFPINEDRKSSTSQQITSSYDVIWFKQSVKNACGLYAILHSLSNNQSLLEPGSDLDNFLKSQSDTSSSKNRFDDVTTDQFVLNVIKENVQTFSTGQSEAPEATADTNLHYITYVEENGGIFELDGRNLSGPLYLGKSDPTATDLIEQELVRVRVASYMENANEEDVLNFAMLGLGPNWE</sequence>
<comment type="function">
    <text evidence="4 5 6 7">Deubiquitinating enzyme (DUB) that controls levels of cellular ubiquitin through processing of ubiquitin precursors and ubiquitinated proteins. Thiol protease that recognizes and hydrolyzes a peptide bond at the C-terminal glycine of either ubiquitin or RUB1. Preferentially cleaves ubiquitin from peptides and small adducts.</text>
</comment>
<comment type="catalytic activity">
    <reaction evidence="3">
        <text>Thiol-dependent hydrolysis of ester, thioester, amide, peptide and isopeptide bonds formed by the C-terminal Gly of ubiquitin (a 76-residue protein attached to proteins as an intracellular targeting signal).</text>
        <dbReference type="EC" id="3.4.19.12"/>
    </reaction>
</comment>
<comment type="biophysicochemical properties">
    <phDependence>
        <text evidence="5">Optimum pH is 8.5. Inactive at a pH below 6.5.</text>
    </phDependence>
    <temperatureDependence>
        <text evidence="5">Optimum temperature is 27 degrees Celsius.</text>
    </temperatureDependence>
</comment>
<comment type="miscellaneous">
    <text>Can hydrolyze human UBB(+1), a mutated form of ubiquitin which is not effectively degraded by the proteasome and is associated with neurogenerative disorders. It can do so despite of the fact that the C-terminal 'Gly-76' of ubiquitin has been substituted for a tyrosine in UBB(+1).</text>
</comment>
<comment type="similarity">
    <text evidence="8">Belongs to the peptidase C12 family.</text>
</comment>
<dbReference type="EC" id="3.4.19.12"/>
<dbReference type="EMBL" id="Z49599">
    <property type="protein sequence ID" value="CAA89629.1"/>
    <property type="molecule type" value="Genomic_DNA"/>
</dbReference>
<dbReference type="EMBL" id="BK006943">
    <property type="protein sequence ID" value="DAA08884.1"/>
    <property type="molecule type" value="Genomic_DNA"/>
</dbReference>
<dbReference type="PIR" id="S51332">
    <property type="entry name" value="S51332"/>
</dbReference>
<dbReference type="RefSeq" id="NP_012633.1">
    <property type="nucleotide sequence ID" value="NM_001181757.1"/>
</dbReference>
<dbReference type="PDB" id="1CMX">
    <property type="method" value="X-ray"/>
    <property type="resolution" value="2.25 A"/>
    <property type="chains" value="A/C=1-235"/>
</dbReference>
<dbReference type="PDB" id="7EN4">
    <property type="method" value="NMR"/>
    <property type="chains" value="A=1-236"/>
</dbReference>
<dbReference type="PDBsum" id="1CMX"/>
<dbReference type="PDBsum" id="7EN4"/>
<dbReference type="SMR" id="P35127"/>
<dbReference type="BioGRID" id="33854">
    <property type="interactions" value="129"/>
</dbReference>
<dbReference type="DIP" id="DIP-5052N"/>
<dbReference type="FunCoup" id="P35127">
    <property type="interactions" value="681"/>
</dbReference>
<dbReference type="IntAct" id="P35127">
    <property type="interactions" value="1"/>
</dbReference>
<dbReference type="STRING" id="4932.YJR099W"/>
<dbReference type="MEROPS" id="C12.002"/>
<dbReference type="iPTMnet" id="P35127"/>
<dbReference type="PaxDb" id="4932-YJR099W"/>
<dbReference type="PeptideAtlas" id="P35127"/>
<dbReference type="EnsemblFungi" id="YJR099W_mRNA">
    <property type="protein sequence ID" value="YJR099W"/>
    <property type="gene ID" value="YJR099W"/>
</dbReference>
<dbReference type="GeneID" id="853562"/>
<dbReference type="KEGG" id="sce:YJR099W"/>
<dbReference type="AGR" id="SGD:S000003860"/>
<dbReference type="SGD" id="S000003860">
    <property type="gene designation" value="YUH1"/>
</dbReference>
<dbReference type="VEuPathDB" id="FungiDB:YJR099W"/>
<dbReference type="eggNOG" id="KOG1415">
    <property type="taxonomic scope" value="Eukaryota"/>
</dbReference>
<dbReference type="GeneTree" id="ENSGT00940000172624"/>
<dbReference type="HOGENOM" id="CLU_054406_0_2_1"/>
<dbReference type="InParanoid" id="P35127"/>
<dbReference type="OMA" id="IDLHYVC"/>
<dbReference type="OrthoDB" id="427186at2759"/>
<dbReference type="BioCyc" id="YEAST:G3O-31727-MONOMER"/>
<dbReference type="BRENDA" id="3.4.19.12">
    <property type="organism ID" value="984"/>
</dbReference>
<dbReference type="Reactome" id="R-SCE-5689603">
    <property type="pathway name" value="UCH proteinases"/>
</dbReference>
<dbReference type="Reactome" id="R-SCE-8866652">
    <property type="pathway name" value="Synthesis of active ubiquitin: roles of E1 and E2 enzymes"/>
</dbReference>
<dbReference type="Reactome" id="R-SCE-8951664">
    <property type="pathway name" value="Neddylation"/>
</dbReference>
<dbReference type="BioGRID-ORCS" id="853562">
    <property type="hits" value="0 hits in 10 CRISPR screens"/>
</dbReference>
<dbReference type="EvolutionaryTrace" id="P35127"/>
<dbReference type="PRO" id="PR:P35127"/>
<dbReference type="Proteomes" id="UP000002311">
    <property type="component" value="Chromosome X"/>
</dbReference>
<dbReference type="RNAct" id="P35127">
    <property type="molecule type" value="protein"/>
</dbReference>
<dbReference type="GO" id="GO:0005737">
    <property type="term" value="C:cytoplasm"/>
    <property type="evidence" value="ECO:0000318"/>
    <property type="project" value="GO_Central"/>
</dbReference>
<dbReference type="GO" id="GO:0004843">
    <property type="term" value="F:cysteine-type deubiquitinase activity"/>
    <property type="evidence" value="ECO:0000314"/>
    <property type="project" value="SGD"/>
</dbReference>
<dbReference type="GO" id="GO:0030163">
    <property type="term" value="P:protein catabolic process"/>
    <property type="evidence" value="ECO:0000318"/>
    <property type="project" value="GO_Central"/>
</dbReference>
<dbReference type="GO" id="GO:0010992">
    <property type="term" value="P:ubiquitin recycling"/>
    <property type="evidence" value="ECO:0000305"/>
    <property type="project" value="SGD"/>
</dbReference>
<dbReference type="GO" id="GO:0006511">
    <property type="term" value="P:ubiquitin-dependent protein catabolic process"/>
    <property type="evidence" value="ECO:0007669"/>
    <property type="project" value="InterPro"/>
</dbReference>
<dbReference type="FunFam" id="3.40.532.10:FF:000012">
    <property type="entry name" value="Ubiquitin carboxyl-terminal hydrolase"/>
    <property type="match status" value="1"/>
</dbReference>
<dbReference type="Gene3D" id="3.40.532.10">
    <property type="entry name" value="Peptidase C12, ubiquitin carboxyl-terminal hydrolase"/>
    <property type="match status" value="1"/>
</dbReference>
<dbReference type="IDEAL" id="IID50315"/>
<dbReference type="InterPro" id="IPR038765">
    <property type="entry name" value="Papain-like_cys_pep_sf"/>
</dbReference>
<dbReference type="InterPro" id="IPR001578">
    <property type="entry name" value="Peptidase_C12_UCH"/>
</dbReference>
<dbReference type="InterPro" id="IPR036959">
    <property type="entry name" value="Peptidase_C12_UCH_sf"/>
</dbReference>
<dbReference type="InterPro" id="IPR057254">
    <property type="entry name" value="UCH_AS"/>
</dbReference>
<dbReference type="PANTHER" id="PTHR10589">
    <property type="entry name" value="UBIQUITIN CARBOXYL-TERMINAL HYDROLASE"/>
    <property type="match status" value="1"/>
</dbReference>
<dbReference type="PANTHER" id="PTHR10589:SF17">
    <property type="entry name" value="UBIQUITIN CARBOXYL-TERMINAL HYDROLASE"/>
    <property type="match status" value="1"/>
</dbReference>
<dbReference type="Pfam" id="PF01088">
    <property type="entry name" value="Peptidase_C12"/>
    <property type="match status" value="1"/>
</dbReference>
<dbReference type="PRINTS" id="PR00707">
    <property type="entry name" value="UBCTHYDRLASE"/>
</dbReference>
<dbReference type="SUPFAM" id="SSF54001">
    <property type="entry name" value="Cysteine proteinases"/>
    <property type="match status" value="1"/>
</dbReference>
<dbReference type="PROSITE" id="PS00140">
    <property type="entry name" value="UCH_1"/>
    <property type="match status" value="1"/>
</dbReference>
<dbReference type="PROSITE" id="PS52048">
    <property type="entry name" value="UCH_DOMAIN"/>
    <property type="match status" value="1"/>
</dbReference>
<evidence type="ECO:0000255" key="1">
    <source>
        <dbReference type="PROSITE-ProRule" id="PRU01393"/>
    </source>
</evidence>
<evidence type="ECO:0000255" key="2">
    <source>
        <dbReference type="PROSITE-ProRule" id="PRU10091"/>
    </source>
</evidence>
<evidence type="ECO:0000269" key="3">
    <source>
    </source>
</evidence>
<evidence type="ECO:0000269" key="4">
    <source>
    </source>
</evidence>
<evidence type="ECO:0000269" key="5">
    <source>
    </source>
</evidence>
<evidence type="ECO:0000269" key="6">
    <source>
    </source>
</evidence>
<evidence type="ECO:0000269" key="7">
    <source>
    </source>
</evidence>
<evidence type="ECO:0000305" key="8"/>
<evidence type="ECO:0007829" key="9">
    <source>
        <dbReference type="PDB" id="1CMX"/>
    </source>
</evidence>
<evidence type="ECO:0007829" key="10">
    <source>
        <dbReference type="PDB" id="7EN4"/>
    </source>
</evidence>
<keyword id="KW-0002">3D-structure</keyword>
<keyword id="KW-0378">Hydrolase</keyword>
<keyword id="KW-0645">Protease</keyword>
<keyword id="KW-1185">Reference proteome</keyword>
<keyword id="KW-0788">Thiol protease</keyword>
<keyword id="KW-0833">Ubl conjugation pathway</keyword>
<gene>
    <name type="primary">YUH1</name>
    <name type="ordered locus">YJR099W</name>
    <name type="ORF">J1941</name>
</gene>
<accession>P35127</accession>
<accession>D6VWR8</accession>
<proteinExistence type="evidence at protein level"/>
<organism>
    <name type="scientific">Saccharomyces cerevisiae (strain ATCC 204508 / S288c)</name>
    <name type="common">Baker's yeast</name>
    <dbReference type="NCBI Taxonomy" id="559292"/>
    <lineage>
        <taxon>Eukaryota</taxon>
        <taxon>Fungi</taxon>
        <taxon>Dikarya</taxon>
        <taxon>Ascomycota</taxon>
        <taxon>Saccharomycotina</taxon>
        <taxon>Saccharomycetes</taxon>
        <taxon>Saccharomycetales</taxon>
        <taxon>Saccharomycetaceae</taxon>
        <taxon>Saccharomyces</taxon>
    </lineage>
</organism>
<feature type="chain" id="PRO_0000211073" description="Ubiquitin carboxyl-terminal hydrolase YUH1">
    <location>
        <begin position="1"/>
        <end position="236"/>
    </location>
</feature>
<feature type="domain" description="UCH catalytic" evidence="1">
    <location>
        <begin position="7"/>
        <end position="233"/>
    </location>
</feature>
<feature type="region of interest" description="Interaction with ubiquitin">
    <location>
        <begin position="10"/>
        <end position="15"/>
    </location>
</feature>
<feature type="region of interest" description="Interaction with ubiquitin">
    <location>
        <begin position="149"/>
        <end position="157"/>
    </location>
</feature>
<feature type="region of interest" description="Interaction with ubiquitin">
    <location>
        <begin position="219"/>
        <end position="228"/>
    </location>
</feature>
<feature type="active site" description="Nucleophile" evidence="1 2">
    <location>
        <position position="90"/>
    </location>
</feature>
<feature type="active site" description="Proton donor" evidence="1">
    <location>
        <position position="166"/>
    </location>
</feature>
<feature type="site" description="Transition state stabilizer" evidence="1">
    <location>
        <position position="84"/>
    </location>
</feature>
<feature type="site" description="Important for enzyme activity" evidence="1">
    <location>
        <position position="181"/>
    </location>
</feature>
<feature type="helix" evidence="9">
    <location>
        <begin position="15"/>
        <end position="25"/>
    </location>
</feature>
<feature type="strand" evidence="9">
    <location>
        <begin position="31"/>
        <end position="36"/>
    </location>
</feature>
<feature type="strand" evidence="10">
    <location>
        <begin position="39"/>
        <end position="41"/>
    </location>
</feature>
<feature type="helix" evidence="9">
    <location>
        <begin position="44"/>
        <end position="46"/>
    </location>
</feature>
<feature type="strand" evidence="9">
    <location>
        <begin position="54"/>
        <end position="60"/>
    </location>
</feature>
<feature type="strand" evidence="10">
    <location>
        <begin position="75"/>
        <end position="79"/>
    </location>
</feature>
<feature type="helix" evidence="9">
    <location>
        <begin position="90"/>
        <end position="100"/>
    </location>
</feature>
<feature type="helix" evidence="9">
    <location>
        <begin position="103"/>
        <end position="105"/>
    </location>
</feature>
<feature type="helix" evidence="9">
    <location>
        <begin position="111"/>
        <end position="122"/>
    </location>
</feature>
<feature type="strand" evidence="9">
    <location>
        <begin position="126"/>
        <end position="129"/>
    </location>
</feature>
<feature type="helix" evidence="9">
    <location>
        <begin position="132"/>
        <end position="143"/>
    </location>
</feature>
<feature type="helix" evidence="9">
    <location>
        <begin position="146"/>
        <end position="150"/>
    </location>
</feature>
<feature type="strand" evidence="9">
    <location>
        <begin position="152"/>
        <end position="154"/>
    </location>
</feature>
<feature type="strand" evidence="10">
    <location>
        <begin position="158"/>
        <end position="160"/>
    </location>
</feature>
<feature type="strand" evidence="9">
    <location>
        <begin position="164"/>
        <end position="172"/>
    </location>
</feature>
<feature type="strand" evidence="9">
    <location>
        <begin position="174"/>
        <end position="180"/>
    </location>
</feature>
<feature type="strand" evidence="9">
    <location>
        <begin position="189"/>
        <end position="193"/>
    </location>
</feature>
<feature type="helix" evidence="9">
    <location>
        <begin position="201"/>
        <end position="203"/>
    </location>
</feature>
<feature type="helix" evidence="9">
    <location>
        <begin position="205"/>
        <end position="221"/>
    </location>
</feature>
<feature type="strand" evidence="10">
    <location>
        <begin position="223"/>
        <end position="225"/>
    </location>
</feature>
<feature type="strand" evidence="9">
    <location>
        <begin position="227"/>
        <end position="233"/>
    </location>
</feature>
<reference key="1">
    <citation type="journal article" date="1989" name="Biotechnology (N.Y.)">
        <title>Cloning and expression of a yeast ubiquitin-protein cleaving activity in Escherichia coli.</title>
        <authorList>
            <person name="Miller H.I."/>
            <person name="Henzel W.J."/>
            <person name="Ridgway J.B."/>
            <person name="Kuang W.-J."/>
            <person name="Chisholm V."/>
            <person name="Liu C.-C."/>
        </authorList>
    </citation>
    <scope>NUCLEOTIDE SEQUENCE [GENOMIC DNA]</scope>
</reference>
<reference key="2">
    <citation type="journal article" date="1996" name="EMBO J.">
        <title>Complete nucleotide sequence of Saccharomyces cerevisiae chromosome X.</title>
        <authorList>
            <person name="Galibert F."/>
            <person name="Alexandraki D."/>
            <person name="Baur A."/>
            <person name="Boles E."/>
            <person name="Chalwatzis N."/>
            <person name="Chuat J.-C."/>
            <person name="Coster F."/>
            <person name="Cziepluch C."/>
            <person name="de Haan M."/>
            <person name="Domdey H."/>
            <person name="Durand P."/>
            <person name="Entian K.-D."/>
            <person name="Gatius M."/>
            <person name="Goffeau A."/>
            <person name="Grivell L.A."/>
            <person name="Hennemann A."/>
            <person name="Herbert C.J."/>
            <person name="Heumann K."/>
            <person name="Hilger F."/>
            <person name="Hollenberg C.P."/>
            <person name="Huang M.-E."/>
            <person name="Jacq C."/>
            <person name="Jauniaux J.-C."/>
            <person name="Katsoulou C."/>
            <person name="Kirchrath L."/>
            <person name="Kleine K."/>
            <person name="Kordes E."/>
            <person name="Koetter P."/>
            <person name="Liebl S."/>
            <person name="Louis E.J."/>
            <person name="Manus V."/>
            <person name="Mewes H.-W."/>
            <person name="Miosga T."/>
            <person name="Obermaier B."/>
            <person name="Perea J."/>
            <person name="Pohl T.M."/>
            <person name="Portetelle D."/>
            <person name="Pujol A."/>
            <person name="Purnelle B."/>
            <person name="Ramezani Rad M."/>
            <person name="Rasmussen S.W."/>
            <person name="Rose M."/>
            <person name="Rossau R."/>
            <person name="Schaaff-Gerstenschlaeger I."/>
            <person name="Smits P.H.M."/>
            <person name="Scarcez T."/>
            <person name="Soriano N."/>
            <person name="To Van D."/>
            <person name="Tzermia M."/>
            <person name="Van Broekhoven A."/>
            <person name="Vandenbol M."/>
            <person name="Wedler H."/>
            <person name="von Wettstein D."/>
            <person name="Wambutt R."/>
            <person name="Zagulski M."/>
            <person name="Zollner A."/>
            <person name="Karpfinger-Hartl L."/>
        </authorList>
    </citation>
    <scope>NUCLEOTIDE SEQUENCE [LARGE SCALE GENOMIC DNA]</scope>
    <source>
        <strain>ATCC 204508 / S288c</strain>
    </source>
</reference>
<reference key="3">
    <citation type="journal article" date="2014" name="G3 (Bethesda)">
        <title>The reference genome sequence of Saccharomyces cerevisiae: Then and now.</title>
        <authorList>
            <person name="Engel S.R."/>
            <person name="Dietrich F.S."/>
            <person name="Fisk D.G."/>
            <person name="Binkley G."/>
            <person name="Balakrishnan R."/>
            <person name="Costanzo M.C."/>
            <person name="Dwight S.S."/>
            <person name="Hitz B.C."/>
            <person name="Karra K."/>
            <person name="Nash R.S."/>
            <person name="Weng S."/>
            <person name="Wong E.D."/>
            <person name="Lloyd P."/>
            <person name="Skrzypek M.S."/>
            <person name="Miyasato S.R."/>
            <person name="Simison M."/>
            <person name="Cherry J.M."/>
        </authorList>
    </citation>
    <scope>GENOME REANNOTATION</scope>
    <source>
        <strain>ATCC 204508 / S288c</strain>
    </source>
</reference>
<reference key="4">
    <citation type="journal article" date="1989" name="J. Biol. Chem.">
        <title>Purification of a ubiquitin protein peptidase from yeast with efficient in vitro assays.</title>
        <authorList>
            <person name="Liu C.C."/>
            <person name="Miller H.I."/>
            <person name="Kohr W.J."/>
            <person name="Silber J.I."/>
        </authorList>
    </citation>
    <scope>FUNCTION</scope>
</reference>
<reference key="5">
    <citation type="journal article" date="1999" name="Anal. Biochem.">
        <title>Chemically synthesized ubiquitin extension proteins detect distinct catalytic capacities of deubiquitinating enzymes.</title>
        <authorList>
            <person name="Layfield R."/>
            <person name="Franklin K."/>
            <person name="Landon M."/>
            <person name="Walker G."/>
            <person name="Wang P."/>
            <person name="Ramage R."/>
            <person name="Brown A."/>
            <person name="Love S."/>
            <person name="Urquhart K."/>
            <person name="Muir T."/>
            <person name="Baker R."/>
            <person name="Mayer R.J."/>
        </authorList>
    </citation>
    <scope>CATALYTIC ACTIVITY</scope>
    <scope>SUBSTRATE SPECIFICITY</scope>
</reference>
<reference key="6">
    <citation type="journal article" date="2002" name="Eukaryot. Cell">
        <title>Rub1p processing by Yuh1p is required for wild-type levels of Rub1p conjugation to Cdc53p.</title>
        <authorList>
            <person name="Linghu B."/>
            <person name="Callis J."/>
            <person name="Goebl M.G."/>
        </authorList>
    </citation>
    <scope>FUNCTION IN RUB1 PROCESSING</scope>
</reference>
<reference key="7">
    <citation type="journal article" date="2007" name="Protein Expr. Purif.">
        <title>Characterization of ubiquitin C-terminal hydrolase 1 (YUH1) from Saccharomyces cerevisiae expressed in recombinant Escherichia coli.</title>
        <authorList>
            <person name="Yu H.A."/>
            <person name="Kim S.G."/>
            <person name="Kim E.J."/>
            <person name="Lee W.J."/>
            <person name="Kim D.O."/>
            <person name="Park K."/>
            <person name="Park Y.C."/>
            <person name="Seo J.H."/>
        </authorList>
    </citation>
    <scope>FUNCTION</scope>
    <scope>BIOPHYSICOCHEMICAL PROPERTIES</scope>
</reference>
<reference key="8">
    <citation type="journal article" date="2011" name="FEBS Lett.">
        <title>Mutant ubiquitin (UBB(+1)) associated with neurodegenerative disorders is hydrolyzed by ubiquitin C-terminal hydrolase L3 (UCH-L3).</title>
        <authorList>
            <person name="Dennissen F.J."/>
            <person name="Kholod N."/>
            <person name="Hermes D.J."/>
            <person name="Kemmerling N."/>
            <person name="Steinbusch H.W."/>
            <person name="Dantuma N.P."/>
            <person name="van Leeuwen F.W."/>
        </authorList>
    </citation>
    <scope>FUNCTION IN UBB(+1) HYDROLYSIS</scope>
</reference>
<reference key="9">
    <citation type="journal article" date="1999" name="EMBO J.">
        <title>Structural basis for the specificity of ubiquitin C-terminal hydrolases.</title>
        <authorList>
            <person name="Johnston S.C."/>
            <person name="Riddle S.M."/>
            <person name="Cohen R.E."/>
            <person name="Hill C.P."/>
        </authorList>
    </citation>
    <scope>X-RAY CRYSTALLOGRAPHY (2.25 ANGSTROMS) IN COMPLEX WITH UBIQUITIN</scope>
    <scope>ACTIVE SITE</scope>
</reference>